<dbReference type="EC" id="2.5.1.75" evidence="1"/>
<dbReference type="EMBL" id="AE005672">
    <property type="protein sequence ID" value="AAK74816.1"/>
    <property type="molecule type" value="Genomic_DNA"/>
</dbReference>
<dbReference type="PIR" id="G95077">
    <property type="entry name" value="G95077"/>
</dbReference>
<dbReference type="RefSeq" id="WP_000850193.1">
    <property type="nucleotide sequence ID" value="NZ_CP155539.1"/>
</dbReference>
<dbReference type="SMR" id="Q97RW5"/>
<dbReference type="IntAct" id="Q97RW5">
    <property type="interactions" value="1"/>
</dbReference>
<dbReference type="PaxDb" id="170187-SP_0671"/>
<dbReference type="EnsemblBacteria" id="AAK74816">
    <property type="protein sequence ID" value="AAK74816"/>
    <property type="gene ID" value="SP_0671"/>
</dbReference>
<dbReference type="KEGG" id="spn:SP_0671"/>
<dbReference type="eggNOG" id="COG0324">
    <property type="taxonomic scope" value="Bacteria"/>
</dbReference>
<dbReference type="PhylomeDB" id="Q97RW5"/>
<dbReference type="BioCyc" id="SPNE170187:G1FZB-694-MONOMER"/>
<dbReference type="Proteomes" id="UP000000585">
    <property type="component" value="Chromosome"/>
</dbReference>
<dbReference type="GO" id="GO:0005524">
    <property type="term" value="F:ATP binding"/>
    <property type="evidence" value="ECO:0007669"/>
    <property type="project" value="UniProtKB-UniRule"/>
</dbReference>
<dbReference type="GO" id="GO:0052381">
    <property type="term" value="F:tRNA dimethylallyltransferase activity"/>
    <property type="evidence" value="ECO:0007669"/>
    <property type="project" value="UniProtKB-UniRule"/>
</dbReference>
<dbReference type="GO" id="GO:0006400">
    <property type="term" value="P:tRNA modification"/>
    <property type="evidence" value="ECO:0007669"/>
    <property type="project" value="TreeGrafter"/>
</dbReference>
<dbReference type="Gene3D" id="3.40.50.300">
    <property type="entry name" value="P-loop containing nucleotide triphosphate hydrolases"/>
    <property type="match status" value="1"/>
</dbReference>
<dbReference type="HAMAP" id="MF_00185">
    <property type="entry name" value="IPP_trans"/>
    <property type="match status" value="1"/>
</dbReference>
<dbReference type="InterPro" id="IPR039657">
    <property type="entry name" value="Dimethylallyltransferase"/>
</dbReference>
<dbReference type="InterPro" id="IPR018022">
    <property type="entry name" value="IPT"/>
</dbReference>
<dbReference type="InterPro" id="IPR027417">
    <property type="entry name" value="P-loop_NTPase"/>
</dbReference>
<dbReference type="NCBIfam" id="TIGR00174">
    <property type="entry name" value="miaA"/>
    <property type="match status" value="1"/>
</dbReference>
<dbReference type="PANTHER" id="PTHR11088">
    <property type="entry name" value="TRNA DIMETHYLALLYLTRANSFERASE"/>
    <property type="match status" value="1"/>
</dbReference>
<dbReference type="PANTHER" id="PTHR11088:SF60">
    <property type="entry name" value="TRNA DIMETHYLALLYLTRANSFERASE"/>
    <property type="match status" value="1"/>
</dbReference>
<dbReference type="Pfam" id="PF01715">
    <property type="entry name" value="IPPT"/>
    <property type="match status" value="1"/>
</dbReference>
<dbReference type="SUPFAM" id="SSF52540">
    <property type="entry name" value="P-loop containing nucleoside triphosphate hydrolases"/>
    <property type="match status" value="2"/>
</dbReference>
<gene>
    <name evidence="1" type="primary">miaA</name>
    <name type="ordered locus">SP_0671</name>
</gene>
<proteinExistence type="evidence at protein level"/>
<evidence type="ECO:0000255" key="1">
    <source>
        <dbReference type="HAMAP-Rule" id="MF_00185"/>
    </source>
</evidence>
<reference key="1">
    <citation type="journal article" date="2001" name="Science">
        <title>Complete genome sequence of a virulent isolate of Streptococcus pneumoniae.</title>
        <authorList>
            <person name="Tettelin H."/>
            <person name="Nelson K.E."/>
            <person name="Paulsen I.T."/>
            <person name="Eisen J.A."/>
            <person name="Read T.D."/>
            <person name="Peterson S.N."/>
            <person name="Heidelberg J.F."/>
            <person name="DeBoy R.T."/>
            <person name="Haft D.H."/>
            <person name="Dodson R.J."/>
            <person name="Durkin A.S."/>
            <person name="Gwinn M.L."/>
            <person name="Kolonay J.F."/>
            <person name="Nelson W.C."/>
            <person name="Peterson J.D."/>
            <person name="Umayam L.A."/>
            <person name="White O."/>
            <person name="Salzberg S.L."/>
            <person name="Lewis M.R."/>
            <person name="Radune D."/>
            <person name="Holtzapple E.K."/>
            <person name="Khouri H.M."/>
            <person name="Wolf A.M."/>
            <person name="Utterback T.R."/>
            <person name="Hansen C.L."/>
            <person name="McDonald L.A."/>
            <person name="Feldblyum T.V."/>
            <person name="Angiuoli S.V."/>
            <person name="Dickinson T."/>
            <person name="Hickey E.K."/>
            <person name="Holt I.E."/>
            <person name="Loftus B.J."/>
            <person name="Yang F."/>
            <person name="Smith H.O."/>
            <person name="Venter J.C."/>
            <person name="Dougherty B.A."/>
            <person name="Morrison D.A."/>
            <person name="Hollingshead S.K."/>
            <person name="Fraser C.M."/>
        </authorList>
    </citation>
    <scope>NUCLEOTIDE SEQUENCE [LARGE SCALE GENOMIC DNA]</scope>
    <source>
        <strain>ATCC BAA-334 / TIGR4</strain>
    </source>
</reference>
<sequence>MKTKIIVIVGPTAVGKTALAIEVAKRFNGEVVSGDSQQVYRGLDIGTAKASPEEQAAVPHHLIDVREITESYSAFDFVSEAKMTIEGIHNRGKLAIIAGGTGLYIQSLLEGYHLGGETPHEEILAYRASLEPYSDEELAHLVDQAGLEIPQFNRRRAMRALEIAHFGQDLENQETLYEPLIICLDDERSQLYERINHRVDLMFEAGLLDEAKWLFDHSPNVQAAKGIGYKELFPYFRGEQTLEEASESLKQATRRFAKRQLTWFRNRMQVTFYQIGESGVQDRILSQIEEFLDD</sequence>
<keyword id="KW-0067">ATP-binding</keyword>
<keyword id="KW-0460">Magnesium</keyword>
<keyword id="KW-0547">Nucleotide-binding</keyword>
<keyword id="KW-1185">Reference proteome</keyword>
<keyword id="KW-0808">Transferase</keyword>
<keyword id="KW-0819">tRNA processing</keyword>
<comment type="function">
    <text evidence="1">Catalyzes the transfer of a dimethylallyl group onto the adenine at position 37 in tRNAs that read codons beginning with uridine, leading to the formation of N6-(dimethylallyl)adenosine (i(6)A).</text>
</comment>
<comment type="catalytic activity">
    <reaction evidence="1">
        <text>adenosine(37) in tRNA + dimethylallyl diphosphate = N(6)-dimethylallyladenosine(37) in tRNA + diphosphate</text>
        <dbReference type="Rhea" id="RHEA:26482"/>
        <dbReference type="Rhea" id="RHEA-COMP:10162"/>
        <dbReference type="Rhea" id="RHEA-COMP:10375"/>
        <dbReference type="ChEBI" id="CHEBI:33019"/>
        <dbReference type="ChEBI" id="CHEBI:57623"/>
        <dbReference type="ChEBI" id="CHEBI:74411"/>
        <dbReference type="ChEBI" id="CHEBI:74415"/>
        <dbReference type="EC" id="2.5.1.75"/>
    </reaction>
</comment>
<comment type="cofactor">
    <cofactor evidence="1">
        <name>Mg(2+)</name>
        <dbReference type="ChEBI" id="CHEBI:18420"/>
    </cofactor>
</comment>
<comment type="subunit">
    <text evidence="1">Monomer.</text>
</comment>
<comment type="interaction">
    <interactant intactId="EBI-6474857">
        <id>Q97RW5</id>
    </interactant>
    <interactant intactId="EBI-6474861">
        <id>Q97SA4</id>
        <label>SP_0482</label>
    </interactant>
    <organismsDiffer>false</organismsDiffer>
    <experiments>3</experiments>
</comment>
<comment type="similarity">
    <text evidence="1">Belongs to the IPP transferase family.</text>
</comment>
<feature type="chain" id="PRO_0000163985" description="tRNA dimethylallyltransferase">
    <location>
        <begin position="1"/>
        <end position="294"/>
    </location>
</feature>
<feature type="region of interest" description="Interaction with substrate tRNA" evidence="1">
    <location>
        <begin position="35"/>
        <end position="38"/>
    </location>
</feature>
<feature type="binding site" evidence="1">
    <location>
        <begin position="10"/>
        <end position="17"/>
    </location>
    <ligand>
        <name>ATP</name>
        <dbReference type="ChEBI" id="CHEBI:30616"/>
    </ligand>
</feature>
<feature type="binding site" evidence="1">
    <location>
        <begin position="12"/>
        <end position="17"/>
    </location>
    <ligand>
        <name>substrate</name>
    </ligand>
</feature>
<feature type="site" description="Interaction with substrate tRNA" evidence="1">
    <location>
        <position position="101"/>
    </location>
</feature>
<feature type="site" description="Interaction with substrate tRNA" evidence="1">
    <location>
        <position position="127"/>
    </location>
</feature>
<accession>Q97RW5</accession>
<name>MIAA_STRPN</name>
<protein>
    <recommendedName>
        <fullName evidence="1">tRNA dimethylallyltransferase</fullName>
        <ecNumber evidence="1">2.5.1.75</ecNumber>
    </recommendedName>
    <alternativeName>
        <fullName evidence="1">Dimethylallyl diphosphate:tRNA dimethylallyltransferase</fullName>
        <shortName evidence="1">DMAPP:tRNA dimethylallyltransferase</shortName>
        <shortName evidence="1">DMATase</shortName>
    </alternativeName>
    <alternativeName>
        <fullName evidence="1">Isopentenyl-diphosphate:tRNA isopentenyltransferase</fullName>
        <shortName evidence="1">IPP transferase</shortName>
        <shortName evidence="1">IPPT</shortName>
        <shortName evidence="1">IPTase</shortName>
    </alternativeName>
</protein>
<organism>
    <name type="scientific">Streptococcus pneumoniae serotype 4 (strain ATCC BAA-334 / TIGR4)</name>
    <dbReference type="NCBI Taxonomy" id="170187"/>
    <lineage>
        <taxon>Bacteria</taxon>
        <taxon>Bacillati</taxon>
        <taxon>Bacillota</taxon>
        <taxon>Bacilli</taxon>
        <taxon>Lactobacillales</taxon>
        <taxon>Streptococcaceae</taxon>
        <taxon>Streptococcus</taxon>
    </lineage>
</organism>